<keyword id="KW-0238">DNA-binding</keyword>
<keyword id="KW-0539">Nucleus</keyword>
<keyword id="KW-1267">Proteomics identification</keyword>
<keyword id="KW-1185">Reference proteome</keyword>
<gene>
    <name type="primary">TIGD3</name>
</gene>
<organism>
    <name type="scientific">Homo sapiens</name>
    <name type="common">Human</name>
    <dbReference type="NCBI Taxonomy" id="9606"/>
    <lineage>
        <taxon>Eukaryota</taxon>
        <taxon>Metazoa</taxon>
        <taxon>Chordata</taxon>
        <taxon>Craniata</taxon>
        <taxon>Vertebrata</taxon>
        <taxon>Euteleostomi</taxon>
        <taxon>Mammalia</taxon>
        <taxon>Eutheria</taxon>
        <taxon>Euarchontoglires</taxon>
        <taxon>Primates</taxon>
        <taxon>Haplorrhini</taxon>
        <taxon>Catarrhini</taxon>
        <taxon>Hominidae</taxon>
        <taxon>Homo</taxon>
    </lineage>
</organism>
<name>TIGD3_HUMAN</name>
<proteinExistence type="evidence at protein level"/>
<sequence length="471" mass="52027">MELSSKKKLHALSLAEKIQVLELLDESKMSQSEVARRFQVSQPQISRICKNKEKLLADWCSGTANRERKRKRESKYSGIDEALLCWYHIARAKAWDVTGPMLLHKAKELADIMGQDFVPSIGWLVRWKRRNNVGFGARHVLAPSFPPEPPPPGLTSQAQLPLSLKDFSPEDVFGCAELPLLYRAVPGSFGACDQVQVLLCANSRGTEKRRVLLGGLQAAPRCFFGIRSEALPASYHPDLGIPWLEWLAQFDRDMGQQGRQVALLLAARVVEELAGLPGLYHVKLLPLAASSTTPPLPSSVVRAFKAHYRHRLLGKLAAIQSERDGTSLAEAGAGITVLDALHVASAAWAKVPPQLIFSSFIQEGLAPGKTPPSSHKTSEMPPVPGGLSLEEFSRFVDLEGEEPRSGVCKEEIGTEDEKGDREGAFEPLPTKADALRALGTLRRWFECNSTSPELFEKFYDCEEEVERLCCL</sequence>
<protein>
    <recommendedName>
        <fullName>Tigger transposable element-derived protein 3</fullName>
    </recommendedName>
</protein>
<dbReference type="EMBL" id="BC074862">
    <property type="protein sequence ID" value="AAH74862.1"/>
    <property type="molecule type" value="mRNA"/>
</dbReference>
<dbReference type="CCDS" id="CCDS8101.1"/>
<dbReference type="RefSeq" id="NP_663771.1">
    <property type="nucleotide sequence ID" value="NM_145719.3"/>
</dbReference>
<dbReference type="SMR" id="Q6B0B8"/>
<dbReference type="BioGRID" id="128641">
    <property type="interactions" value="12"/>
</dbReference>
<dbReference type="FunCoup" id="Q6B0B8">
    <property type="interactions" value="267"/>
</dbReference>
<dbReference type="IntAct" id="Q6B0B8">
    <property type="interactions" value="11"/>
</dbReference>
<dbReference type="STRING" id="9606.ENSP00000308354"/>
<dbReference type="iPTMnet" id="Q6B0B8"/>
<dbReference type="BioMuta" id="TIGD3"/>
<dbReference type="DMDM" id="74762295"/>
<dbReference type="jPOST" id="Q6B0B8"/>
<dbReference type="MassIVE" id="Q6B0B8"/>
<dbReference type="PaxDb" id="9606-ENSP00000308354"/>
<dbReference type="PeptideAtlas" id="Q6B0B8"/>
<dbReference type="ProteomicsDB" id="66205"/>
<dbReference type="Antibodypedia" id="29772">
    <property type="antibodies" value="136 antibodies from 23 providers"/>
</dbReference>
<dbReference type="DNASU" id="220359"/>
<dbReference type="Ensembl" id="ENST00000309880.6">
    <property type="protein sequence ID" value="ENSP00000308354.5"/>
    <property type="gene ID" value="ENSG00000173825.7"/>
</dbReference>
<dbReference type="GeneID" id="220359"/>
<dbReference type="KEGG" id="hsa:220359"/>
<dbReference type="MANE-Select" id="ENST00000309880.6">
    <property type="protein sequence ID" value="ENSP00000308354.5"/>
    <property type="RefSeq nucleotide sequence ID" value="NM_145719.3"/>
    <property type="RefSeq protein sequence ID" value="NP_663771.1"/>
</dbReference>
<dbReference type="UCSC" id="uc001odo.5">
    <property type="organism name" value="human"/>
</dbReference>
<dbReference type="AGR" id="HGNC:18334"/>
<dbReference type="CTD" id="220359"/>
<dbReference type="DisGeNET" id="220359"/>
<dbReference type="GeneCards" id="TIGD3"/>
<dbReference type="HGNC" id="HGNC:18334">
    <property type="gene designation" value="TIGD3"/>
</dbReference>
<dbReference type="HPA" id="ENSG00000173825">
    <property type="expression patterns" value="Tissue enhanced (brain, testis)"/>
</dbReference>
<dbReference type="MIM" id="619084">
    <property type="type" value="gene"/>
</dbReference>
<dbReference type="neXtProt" id="NX_Q6B0B8"/>
<dbReference type="OpenTargets" id="ENSG00000173825"/>
<dbReference type="PharmGKB" id="PA38527"/>
<dbReference type="VEuPathDB" id="HostDB:ENSG00000173825"/>
<dbReference type="eggNOG" id="KOG3105">
    <property type="taxonomic scope" value="Eukaryota"/>
</dbReference>
<dbReference type="GeneTree" id="ENSGT00940000162651"/>
<dbReference type="HOGENOM" id="CLU_018294_0_4_1"/>
<dbReference type="InParanoid" id="Q6B0B8"/>
<dbReference type="OMA" id="PGLCHVR"/>
<dbReference type="OrthoDB" id="9909311at2759"/>
<dbReference type="PAN-GO" id="Q6B0B8">
    <property type="GO annotations" value="2 GO annotations based on evolutionary models"/>
</dbReference>
<dbReference type="PhylomeDB" id="Q6B0B8"/>
<dbReference type="TreeFam" id="TF101131"/>
<dbReference type="PathwayCommons" id="Q6B0B8"/>
<dbReference type="SignaLink" id="Q6B0B8"/>
<dbReference type="BioGRID-ORCS" id="220359">
    <property type="hits" value="24 hits in 1151 CRISPR screens"/>
</dbReference>
<dbReference type="GenomeRNAi" id="220359"/>
<dbReference type="Pharos" id="Q6B0B8">
    <property type="development level" value="Tdark"/>
</dbReference>
<dbReference type="PRO" id="PR:Q6B0B8"/>
<dbReference type="Proteomes" id="UP000005640">
    <property type="component" value="Chromosome 11"/>
</dbReference>
<dbReference type="RNAct" id="Q6B0B8">
    <property type="molecule type" value="protein"/>
</dbReference>
<dbReference type="Bgee" id="ENSG00000173825">
    <property type="expression patterns" value="Expressed in male germ line stem cell (sensu Vertebrata) in testis and 93 other cell types or tissues"/>
</dbReference>
<dbReference type="GO" id="GO:0005634">
    <property type="term" value="C:nucleus"/>
    <property type="evidence" value="ECO:0000318"/>
    <property type="project" value="GO_Central"/>
</dbReference>
<dbReference type="GO" id="GO:0003677">
    <property type="term" value="F:DNA binding"/>
    <property type="evidence" value="ECO:0000318"/>
    <property type="project" value="GO_Central"/>
</dbReference>
<dbReference type="Gene3D" id="1.10.10.60">
    <property type="entry name" value="Homeodomain-like"/>
    <property type="match status" value="2"/>
</dbReference>
<dbReference type="InterPro" id="IPR050863">
    <property type="entry name" value="CenT-Element_Derived"/>
</dbReference>
<dbReference type="InterPro" id="IPR004875">
    <property type="entry name" value="DDE_SF_endonuclease_dom"/>
</dbReference>
<dbReference type="InterPro" id="IPR009057">
    <property type="entry name" value="Homeodomain-like_sf"/>
</dbReference>
<dbReference type="InterPro" id="IPR006600">
    <property type="entry name" value="HTH_CenpB_DNA-bd_dom"/>
</dbReference>
<dbReference type="InterPro" id="IPR007889">
    <property type="entry name" value="HTH_Psq"/>
</dbReference>
<dbReference type="PANTHER" id="PTHR19303:SF36">
    <property type="entry name" value="TIGGER TRANSPOSABLE ELEMENT-DERIVED PROTEIN 3"/>
    <property type="match status" value="1"/>
</dbReference>
<dbReference type="PANTHER" id="PTHR19303">
    <property type="entry name" value="TRANSPOSON"/>
    <property type="match status" value="1"/>
</dbReference>
<dbReference type="Pfam" id="PF04218">
    <property type="entry name" value="CENP-B_N"/>
    <property type="match status" value="1"/>
</dbReference>
<dbReference type="Pfam" id="PF03184">
    <property type="entry name" value="DDE_1"/>
    <property type="match status" value="1"/>
</dbReference>
<dbReference type="Pfam" id="PF03221">
    <property type="entry name" value="HTH_Tnp_Tc5"/>
    <property type="match status" value="1"/>
</dbReference>
<dbReference type="SMART" id="SM00674">
    <property type="entry name" value="CENPB"/>
    <property type="match status" value="1"/>
</dbReference>
<dbReference type="SUPFAM" id="SSF46689">
    <property type="entry name" value="Homeodomain-like"/>
    <property type="match status" value="2"/>
</dbReference>
<dbReference type="PROSITE" id="PS51253">
    <property type="entry name" value="HTH_CENPB"/>
    <property type="match status" value="1"/>
</dbReference>
<dbReference type="PROSITE" id="PS50960">
    <property type="entry name" value="HTH_PSQ"/>
    <property type="match status" value="1"/>
</dbReference>
<comment type="interaction">
    <interactant intactId="EBI-12140557">
        <id>Q6B0B8</id>
    </interactant>
    <interactant intactId="EBI-11278955">
        <id>Q9UL41</id>
        <label>PNMA3</label>
    </interactant>
    <organismsDiffer>false</organismsDiffer>
    <experiments>3</experiments>
</comment>
<comment type="interaction">
    <interactant intactId="EBI-12140557">
        <id>Q6B0B8</id>
    </interactant>
    <interactant intactId="EBI-9512693">
        <id>Q53GL6</id>
        <label>RALY</label>
    </interactant>
    <organismsDiffer>false</organismsDiffer>
    <experiments>3</experiments>
</comment>
<comment type="interaction">
    <interactant intactId="EBI-12140557">
        <id>Q6B0B8</id>
    </interactant>
    <interactant intactId="EBI-11526555">
        <id>Q86SE5-3</id>
        <label>RALYL</label>
    </interactant>
    <organismsDiffer>false</organismsDiffer>
    <experiments>3</experiments>
</comment>
<comment type="interaction">
    <interactant intactId="EBI-12140557">
        <id>Q6B0B8</id>
    </interactant>
    <interactant intactId="EBI-11741437">
        <id>Q08117-2</id>
        <label>TLE5</label>
    </interactant>
    <organismsDiffer>false</organismsDiffer>
    <experiments>3</experiments>
</comment>
<comment type="interaction">
    <interactant intactId="EBI-12140557">
        <id>Q6B0B8</id>
    </interactant>
    <interactant intactId="EBI-10180829">
        <id>Q7KZS0</id>
        <label>UBE2I</label>
    </interactant>
    <organismsDiffer>false</organismsDiffer>
    <experiments>3</experiments>
</comment>
<comment type="subcellular location">
    <subcellularLocation>
        <location evidence="3 4">Nucleus</location>
    </subcellularLocation>
</comment>
<comment type="similarity">
    <text evidence="5">Belongs to the tigger transposable element derived protein family.</text>
</comment>
<feature type="chain" id="PRO_0000271090" description="Tigger transposable element-derived protein 3">
    <location>
        <begin position="1"/>
        <end position="471"/>
    </location>
</feature>
<feature type="domain" description="HTH psq-type" evidence="3">
    <location>
        <begin position="3"/>
        <end position="55"/>
    </location>
</feature>
<feature type="domain" description="HTH CENPB-type" evidence="4">
    <location>
        <begin position="67"/>
        <end position="137"/>
    </location>
</feature>
<feature type="domain" description="DDE-1" evidence="2">
    <location>
        <begin position="167"/>
        <end position="360"/>
    </location>
</feature>
<feature type="DNA-binding region" description="H-T-H motif" evidence="1">
    <location>
        <begin position="31"/>
        <end position="51"/>
    </location>
</feature>
<feature type="DNA-binding region" description="H-T-H motif" evidence="1">
    <location>
        <begin position="100"/>
        <end position="130"/>
    </location>
</feature>
<accession>Q6B0B8</accession>
<reference key="1">
    <citation type="journal article" date="2004" name="Genome Res.">
        <title>The status, quality, and expansion of the NIH full-length cDNA project: the Mammalian Gene Collection (MGC).</title>
        <authorList>
            <consortium name="The MGC Project Team"/>
        </authorList>
    </citation>
    <scope>NUCLEOTIDE SEQUENCE [LARGE SCALE MRNA]</scope>
    <source>
        <tissue>Lung</tissue>
    </source>
</reference>
<evidence type="ECO:0000250" key="1"/>
<evidence type="ECO:0000255" key="2"/>
<evidence type="ECO:0000255" key="3">
    <source>
        <dbReference type="PROSITE-ProRule" id="PRU00320"/>
    </source>
</evidence>
<evidence type="ECO:0000255" key="4">
    <source>
        <dbReference type="PROSITE-ProRule" id="PRU00583"/>
    </source>
</evidence>
<evidence type="ECO:0000305" key="5"/>